<feature type="chain" id="PRO_0000057196" description="Ribonuclease pancreatic">
    <location>
        <begin position="1"/>
        <end position="124"/>
    </location>
</feature>
<feature type="region of interest" description="Disordered" evidence="2">
    <location>
        <begin position="1"/>
        <end position="21"/>
    </location>
</feature>
<feature type="active site" description="Proton acceptor" evidence="1">
    <location>
        <position position="12"/>
    </location>
</feature>
<feature type="active site" description="Proton donor" evidence="1">
    <location>
        <position position="119"/>
    </location>
</feature>
<feature type="binding site" evidence="1">
    <location>
        <position position="7"/>
    </location>
    <ligand>
        <name>substrate</name>
    </ligand>
</feature>
<feature type="binding site" evidence="1">
    <location>
        <position position="10"/>
    </location>
    <ligand>
        <name>substrate</name>
    </ligand>
</feature>
<feature type="binding site" evidence="1">
    <location>
        <begin position="41"/>
        <end position="45"/>
    </location>
    <ligand>
        <name>substrate</name>
    </ligand>
</feature>
<feature type="binding site" evidence="1">
    <location>
        <position position="66"/>
    </location>
    <ligand>
        <name>substrate</name>
    </ligand>
</feature>
<feature type="binding site" evidence="1">
    <location>
        <position position="85"/>
    </location>
    <ligand>
        <name>substrate</name>
    </ligand>
</feature>
<feature type="disulfide bond" evidence="1">
    <location>
        <begin position="26"/>
        <end position="84"/>
    </location>
</feature>
<feature type="disulfide bond" evidence="1">
    <location>
        <begin position="40"/>
        <end position="95"/>
    </location>
</feature>
<feature type="disulfide bond" evidence="1">
    <location>
        <begin position="58"/>
        <end position="110"/>
    </location>
</feature>
<feature type="disulfide bond" evidence="1">
    <location>
        <begin position="65"/>
        <end position="72"/>
    </location>
</feature>
<feature type="sequence variant" description="In 1/3 of the molecules.">
    <location>
        <position position="1"/>
    </location>
</feature>
<proteinExistence type="evidence at protein level"/>
<comment type="function">
    <text evidence="1">Endonuclease that catalyzes the cleavage of RNA on the 3' side of pyrimidine nucleotides. Acts on single-stranded and double-stranded RNA (By similarity).</text>
</comment>
<comment type="catalytic activity">
    <reaction>
        <text>an [RNA] containing cytidine + H2O = an [RNA]-3'-cytidine-3'-phosphate + a 5'-hydroxy-ribonucleotide-3'-[RNA].</text>
        <dbReference type="EC" id="4.6.1.18"/>
    </reaction>
</comment>
<comment type="catalytic activity">
    <reaction>
        <text>an [RNA] containing uridine + H2O = an [RNA]-3'-uridine-3'-phosphate + a 5'-hydroxy-ribonucleotide-3'-[RNA].</text>
        <dbReference type="EC" id="4.6.1.18"/>
    </reaction>
</comment>
<comment type="subunit">
    <text evidence="1">Monomer. Interacts with and forms tight 1:1 complexes with RNH1. Dimerization of two such complexes may occur. Interaction with RNH1 inhibits this protein (By similarity).</text>
</comment>
<comment type="subcellular location">
    <subcellularLocation>
        <location>Secreted</location>
    </subcellularLocation>
</comment>
<comment type="tissue specificity">
    <text>Pancreas.</text>
</comment>
<comment type="similarity">
    <text evidence="3">Belongs to the pancreatic ribonuclease family.</text>
</comment>
<evidence type="ECO:0000250" key="1"/>
<evidence type="ECO:0000256" key="2">
    <source>
        <dbReference type="SAM" id="MobiDB-lite"/>
    </source>
</evidence>
<evidence type="ECO:0000305" key="3"/>
<gene>
    <name type="primary">RNASE1</name>
    <name type="synonym">RNS1</name>
</gene>
<accession>P00680</accession>
<protein>
    <recommendedName>
        <fullName>Ribonuclease pancreatic</fullName>
        <ecNumber>4.6.1.18</ecNumber>
    </recommendedName>
    <alternativeName>
        <fullName>RNase 1</fullName>
    </alternativeName>
    <alternativeName>
        <fullName>RNase A</fullName>
    </alternativeName>
</protein>
<organism>
    <name type="scientific">Galea musteloides</name>
    <name type="common">Common yellow-toothed cavy</name>
    <dbReference type="NCBI Taxonomy" id="10146"/>
    <lineage>
        <taxon>Eukaryota</taxon>
        <taxon>Metazoa</taxon>
        <taxon>Chordata</taxon>
        <taxon>Craniata</taxon>
        <taxon>Vertebrata</taxon>
        <taxon>Euteleostomi</taxon>
        <taxon>Mammalia</taxon>
        <taxon>Eutheria</taxon>
        <taxon>Euarchontoglires</taxon>
        <taxon>Glires</taxon>
        <taxon>Rodentia</taxon>
        <taxon>Hystricomorpha</taxon>
        <taxon>Caviidae</taxon>
        <taxon>Galea</taxon>
    </lineage>
</organism>
<name>RNAS1_GALMU</name>
<dbReference type="EC" id="4.6.1.18"/>
<dbReference type="PIR" id="A00827">
    <property type="entry name" value="NRUI"/>
</dbReference>
<dbReference type="SMR" id="P00680"/>
<dbReference type="GO" id="GO:0005576">
    <property type="term" value="C:extracellular region"/>
    <property type="evidence" value="ECO:0007669"/>
    <property type="project" value="UniProtKB-SubCell"/>
</dbReference>
<dbReference type="GO" id="GO:0016829">
    <property type="term" value="F:lyase activity"/>
    <property type="evidence" value="ECO:0007669"/>
    <property type="project" value="UniProtKB-KW"/>
</dbReference>
<dbReference type="GO" id="GO:0003676">
    <property type="term" value="F:nucleic acid binding"/>
    <property type="evidence" value="ECO:0007669"/>
    <property type="project" value="InterPro"/>
</dbReference>
<dbReference type="GO" id="GO:0004522">
    <property type="term" value="F:ribonuclease A activity"/>
    <property type="evidence" value="ECO:0007669"/>
    <property type="project" value="UniProtKB-EC"/>
</dbReference>
<dbReference type="GO" id="GO:0050830">
    <property type="term" value="P:defense response to Gram-positive bacterium"/>
    <property type="evidence" value="ECO:0007669"/>
    <property type="project" value="TreeGrafter"/>
</dbReference>
<dbReference type="CDD" id="cd06265">
    <property type="entry name" value="RNase_A_canonical"/>
    <property type="match status" value="1"/>
</dbReference>
<dbReference type="FunFam" id="3.10.130.10:FF:000001">
    <property type="entry name" value="Ribonuclease pancreatic"/>
    <property type="match status" value="1"/>
</dbReference>
<dbReference type="Gene3D" id="3.10.130.10">
    <property type="entry name" value="Ribonuclease A-like domain"/>
    <property type="match status" value="1"/>
</dbReference>
<dbReference type="InterPro" id="IPR001427">
    <property type="entry name" value="RNaseA"/>
</dbReference>
<dbReference type="InterPro" id="IPR036816">
    <property type="entry name" value="RNaseA-like_dom_sf"/>
</dbReference>
<dbReference type="InterPro" id="IPR023411">
    <property type="entry name" value="RNaseA_AS"/>
</dbReference>
<dbReference type="InterPro" id="IPR023412">
    <property type="entry name" value="RNaseA_domain"/>
</dbReference>
<dbReference type="PANTHER" id="PTHR11437">
    <property type="entry name" value="RIBONUCLEASE"/>
    <property type="match status" value="1"/>
</dbReference>
<dbReference type="PANTHER" id="PTHR11437:SF24">
    <property type="entry name" value="RIBONUCLEASE PANCREATIC"/>
    <property type="match status" value="1"/>
</dbReference>
<dbReference type="Pfam" id="PF00074">
    <property type="entry name" value="RnaseA"/>
    <property type="match status" value="1"/>
</dbReference>
<dbReference type="PRINTS" id="PR00794">
    <property type="entry name" value="RIBONUCLEASE"/>
</dbReference>
<dbReference type="SMART" id="SM00092">
    <property type="entry name" value="RNAse_Pc"/>
    <property type="match status" value="1"/>
</dbReference>
<dbReference type="SUPFAM" id="SSF54076">
    <property type="entry name" value="RNase A-like"/>
    <property type="match status" value="1"/>
</dbReference>
<dbReference type="PROSITE" id="PS00127">
    <property type="entry name" value="RNASE_PANCREATIC"/>
    <property type="match status" value="1"/>
</dbReference>
<sequence length="124" mass="13870">AESSAMKFQRQHMDSDGHPDTNTNYCNEMMVRRSMTQGRCKPVNTFVHEPLEAVQAVCSQKNVPCKNGQTNCYQSHSSMRITDCRVTSSSKYPNCSYRMTQAQKSIIVACEGTPSVPVHFDATV</sequence>
<reference key="1">
    <citation type="journal article" date="1983" name="J. Mol. Evol.">
        <title>Origin of the duplicated ribonuclease gene in guinea-pig: comparison of the amino acid sequences with those of two close relatives: capybara and cuis ribonuclease.</title>
        <authorList>
            <person name="Beintema J.J."/>
            <person name="Neuteboom B."/>
        </authorList>
    </citation>
    <scope>PROTEIN SEQUENCE</scope>
</reference>
<keyword id="KW-0903">Direct protein sequencing</keyword>
<keyword id="KW-1015">Disulfide bond</keyword>
<keyword id="KW-0255">Endonuclease</keyword>
<keyword id="KW-0378">Hydrolase</keyword>
<keyword id="KW-0456">Lyase</keyword>
<keyword id="KW-0540">Nuclease</keyword>
<keyword id="KW-0964">Secreted</keyword>